<gene>
    <name evidence="1" type="primary">trpA</name>
    <name type="ordered locus">Strop_3170</name>
</gene>
<evidence type="ECO:0000255" key="1">
    <source>
        <dbReference type="HAMAP-Rule" id="MF_00131"/>
    </source>
</evidence>
<name>TRPA_SALTO</name>
<accession>A4X9N0</accession>
<dbReference type="EC" id="4.2.1.20" evidence="1"/>
<dbReference type="EMBL" id="CP000667">
    <property type="protein sequence ID" value="ABP55604.1"/>
    <property type="molecule type" value="Genomic_DNA"/>
</dbReference>
<dbReference type="RefSeq" id="WP_012014381.1">
    <property type="nucleotide sequence ID" value="NC_009380.1"/>
</dbReference>
<dbReference type="SMR" id="A4X9N0"/>
<dbReference type="STRING" id="369723.Strop_3170"/>
<dbReference type="KEGG" id="stp:Strop_3170"/>
<dbReference type="PATRIC" id="fig|369723.5.peg.3262"/>
<dbReference type="eggNOG" id="COG0159">
    <property type="taxonomic scope" value="Bacteria"/>
</dbReference>
<dbReference type="HOGENOM" id="CLU_016734_0_0_11"/>
<dbReference type="UniPathway" id="UPA00035">
    <property type="reaction ID" value="UER00044"/>
</dbReference>
<dbReference type="Proteomes" id="UP000000235">
    <property type="component" value="Chromosome"/>
</dbReference>
<dbReference type="GO" id="GO:0005829">
    <property type="term" value="C:cytosol"/>
    <property type="evidence" value="ECO:0007669"/>
    <property type="project" value="TreeGrafter"/>
</dbReference>
<dbReference type="GO" id="GO:0004834">
    <property type="term" value="F:tryptophan synthase activity"/>
    <property type="evidence" value="ECO:0007669"/>
    <property type="project" value="UniProtKB-UniRule"/>
</dbReference>
<dbReference type="CDD" id="cd04724">
    <property type="entry name" value="Tryptophan_synthase_alpha"/>
    <property type="match status" value="1"/>
</dbReference>
<dbReference type="FunFam" id="3.20.20.70:FF:000037">
    <property type="entry name" value="Tryptophan synthase alpha chain"/>
    <property type="match status" value="1"/>
</dbReference>
<dbReference type="Gene3D" id="3.20.20.70">
    <property type="entry name" value="Aldolase class I"/>
    <property type="match status" value="1"/>
</dbReference>
<dbReference type="HAMAP" id="MF_00131">
    <property type="entry name" value="Trp_synth_alpha"/>
    <property type="match status" value="1"/>
</dbReference>
<dbReference type="InterPro" id="IPR013785">
    <property type="entry name" value="Aldolase_TIM"/>
</dbReference>
<dbReference type="InterPro" id="IPR011060">
    <property type="entry name" value="RibuloseP-bd_barrel"/>
</dbReference>
<dbReference type="InterPro" id="IPR002028">
    <property type="entry name" value="Trp_synthase_suA"/>
</dbReference>
<dbReference type="NCBIfam" id="TIGR00262">
    <property type="entry name" value="trpA"/>
    <property type="match status" value="1"/>
</dbReference>
<dbReference type="PANTHER" id="PTHR43406:SF1">
    <property type="entry name" value="TRYPTOPHAN SYNTHASE ALPHA CHAIN, CHLOROPLASTIC"/>
    <property type="match status" value="1"/>
</dbReference>
<dbReference type="PANTHER" id="PTHR43406">
    <property type="entry name" value="TRYPTOPHAN SYNTHASE, ALPHA CHAIN"/>
    <property type="match status" value="1"/>
</dbReference>
<dbReference type="Pfam" id="PF00290">
    <property type="entry name" value="Trp_syntA"/>
    <property type="match status" value="1"/>
</dbReference>
<dbReference type="SUPFAM" id="SSF51366">
    <property type="entry name" value="Ribulose-phoshate binding barrel"/>
    <property type="match status" value="1"/>
</dbReference>
<protein>
    <recommendedName>
        <fullName evidence="1">Tryptophan synthase alpha chain</fullName>
        <ecNumber evidence="1">4.2.1.20</ecNumber>
    </recommendedName>
</protein>
<proteinExistence type="inferred from homology"/>
<comment type="function">
    <text evidence="1">The alpha subunit is responsible for the aldol cleavage of indoleglycerol phosphate to indole and glyceraldehyde 3-phosphate.</text>
</comment>
<comment type="catalytic activity">
    <reaction evidence="1">
        <text>(1S,2R)-1-C-(indol-3-yl)glycerol 3-phosphate + L-serine = D-glyceraldehyde 3-phosphate + L-tryptophan + H2O</text>
        <dbReference type="Rhea" id="RHEA:10532"/>
        <dbReference type="ChEBI" id="CHEBI:15377"/>
        <dbReference type="ChEBI" id="CHEBI:33384"/>
        <dbReference type="ChEBI" id="CHEBI:57912"/>
        <dbReference type="ChEBI" id="CHEBI:58866"/>
        <dbReference type="ChEBI" id="CHEBI:59776"/>
        <dbReference type="EC" id="4.2.1.20"/>
    </reaction>
</comment>
<comment type="pathway">
    <text evidence="1">Amino-acid biosynthesis; L-tryptophan biosynthesis; L-tryptophan from chorismate: step 5/5.</text>
</comment>
<comment type="subunit">
    <text evidence="1">Tetramer of two alpha and two beta chains.</text>
</comment>
<comment type="similarity">
    <text evidence="1">Belongs to the TrpA family.</text>
</comment>
<feature type="chain" id="PRO_1000076368" description="Tryptophan synthase alpha chain">
    <location>
        <begin position="1"/>
        <end position="267"/>
    </location>
</feature>
<feature type="active site" description="Proton acceptor" evidence="1">
    <location>
        <position position="49"/>
    </location>
</feature>
<feature type="active site" description="Proton acceptor" evidence="1">
    <location>
        <position position="60"/>
    </location>
</feature>
<sequence>MSRIGVAFDQARAEGRAVLVGCMPAGFPTVEGSIAAMTAMVEAGVDVIEVEIPYSDPVMDGPVIQRASDVALAGGVRVADTLRIVEAVAATGAPVVTMTYWNPVEQYGVDAFARDLAAAGGTGLITPDLIPDEAQEWLAASDAYGLDRTFLVSPSSTDARLHMTVEQCRGFVYATTIMGVTGARAQASAAAPVLVSRVRAVTDLPVGVGLGIGTGEQASTASSFADGVIVGSALIRRLLDAPNLPAGLTALRELSAELAAGVRTPAP</sequence>
<reference key="1">
    <citation type="journal article" date="2007" name="Proc. Natl. Acad. Sci. U.S.A.">
        <title>Genome sequencing reveals complex secondary metabolome in the marine actinomycete Salinispora tropica.</title>
        <authorList>
            <person name="Udwary D.W."/>
            <person name="Zeigler L."/>
            <person name="Asolkar R.N."/>
            <person name="Singan V."/>
            <person name="Lapidus A."/>
            <person name="Fenical W."/>
            <person name="Jensen P.R."/>
            <person name="Moore B.S."/>
        </authorList>
    </citation>
    <scope>NUCLEOTIDE SEQUENCE [LARGE SCALE GENOMIC DNA]</scope>
    <source>
        <strain>ATCC BAA-916 / DSM 44818 / JCM 13857 / NBRC 105044 / CNB-440</strain>
    </source>
</reference>
<keyword id="KW-0028">Amino-acid biosynthesis</keyword>
<keyword id="KW-0057">Aromatic amino acid biosynthesis</keyword>
<keyword id="KW-0456">Lyase</keyword>
<keyword id="KW-1185">Reference proteome</keyword>
<keyword id="KW-0822">Tryptophan biosynthesis</keyword>
<organism>
    <name type="scientific">Salinispora tropica (strain ATCC BAA-916 / DSM 44818 / JCM 13857 / NBRC 105044 / CNB-440)</name>
    <dbReference type="NCBI Taxonomy" id="369723"/>
    <lineage>
        <taxon>Bacteria</taxon>
        <taxon>Bacillati</taxon>
        <taxon>Actinomycetota</taxon>
        <taxon>Actinomycetes</taxon>
        <taxon>Micromonosporales</taxon>
        <taxon>Micromonosporaceae</taxon>
        <taxon>Salinispora</taxon>
    </lineage>
</organism>